<feature type="chain" id="PRO_0000099872" description="L-amino-acid oxidase">
    <location>
        <begin position="1"/>
        <end position="107" status="greater than"/>
    </location>
</feature>
<feature type="binding site" evidence="2">
    <location>
        <begin position="35"/>
        <end position="38"/>
    </location>
    <ligand>
        <name>FAD</name>
        <dbReference type="ChEBI" id="CHEBI:57692"/>
    </ligand>
</feature>
<feature type="binding site" evidence="2">
    <location>
        <position position="38"/>
    </location>
    <ligand>
        <name>substrate</name>
    </ligand>
</feature>
<feature type="binding site" evidence="2">
    <location>
        <position position="49"/>
    </location>
    <ligand>
        <name>substrate</name>
    </ligand>
</feature>
<feature type="disulfide bond" evidence="2">
    <location>
        <begin position="10"/>
        <end status="unknown"/>
    </location>
</feature>
<feature type="non-consecutive residues" evidence="4">
    <location>
        <begin position="27"/>
        <end position="28"/>
    </location>
</feature>
<feature type="non-consecutive residues" evidence="4">
    <location>
        <begin position="38"/>
        <end position="39"/>
    </location>
</feature>
<feature type="non-consecutive residues" evidence="4">
    <location>
        <begin position="48"/>
        <end position="49"/>
    </location>
</feature>
<feature type="non-consecutive residues" evidence="4">
    <location>
        <begin position="57"/>
        <end position="58"/>
    </location>
</feature>
<feature type="non-consecutive residues" evidence="4">
    <location>
        <begin position="67"/>
        <end position="68"/>
    </location>
</feature>
<feature type="non-consecutive residues" evidence="4">
    <location>
        <begin position="79"/>
        <end position="80"/>
    </location>
</feature>
<feature type="non-consecutive residues" evidence="4">
    <location>
        <begin position="90"/>
        <end position="91"/>
    </location>
</feature>
<feature type="non-terminal residue" evidence="4">
    <location>
        <position position="107"/>
    </location>
</feature>
<dbReference type="EC" id="1.4.3.2" evidence="3"/>
<dbReference type="SMR" id="P81375"/>
<dbReference type="GO" id="GO:0005576">
    <property type="term" value="C:extracellular region"/>
    <property type="evidence" value="ECO:0007669"/>
    <property type="project" value="UniProtKB-SubCell"/>
</dbReference>
<dbReference type="GO" id="GO:0106329">
    <property type="term" value="F:L-phenylalaine oxidase activity"/>
    <property type="evidence" value="ECO:0007669"/>
    <property type="project" value="RHEA"/>
</dbReference>
<dbReference type="GO" id="GO:0090729">
    <property type="term" value="F:toxin activity"/>
    <property type="evidence" value="ECO:0007669"/>
    <property type="project" value="UniProtKB-KW"/>
</dbReference>
<dbReference type="GO" id="GO:0006915">
    <property type="term" value="P:apoptotic process"/>
    <property type="evidence" value="ECO:0007669"/>
    <property type="project" value="UniProtKB-KW"/>
</dbReference>
<dbReference type="GO" id="GO:0042742">
    <property type="term" value="P:defense response to bacterium"/>
    <property type="evidence" value="ECO:0007669"/>
    <property type="project" value="UniProtKB-KW"/>
</dbReference>
<dbReference type="GO" id="GO:0031640">
    <property type="term" value="P:killing of cells of another organism"/>
    <property type="evidence" value="ECO:0007669"/>
    <property type="project" value="UniProtKB-KW"/>
</dbReference>
<dbReference type="Gene3D" id="3.90.660.10">
    <property type="match status" value="1"/>
</dbReference>
<accession>P81375</accession>
<name>OXLA_MACLB</name>
<reference key="1">
    <citation type="submission" date="1998-05" db="UniProtKB">
        <authorList>
            <person name="Tan C.H."/>
            <person name="Ang W.C."/>
        </authorList>
    </citation>
    <scope>PROTEIN SEQUENCE OF 1-27</scope>
    <source>
        <tissue>Venom</tissue>
    </source>
</reference>
<reference key="2">
    <citation type="journal article" date="2006" name="Toxicon">
        <title>L-amino acid oxidase from Vipera lebetina venom: isolation, characterization, effects on platelets and bacteria.</title>
        <authorList>
            <person name="Tonismagi K."/>
            <person name="Samel M."/>
            <person name="Trummal K."/>
            <person name="Ronnholm G."/>
            <person name="Siigur J."/>
            <person name="Kalkkinen N."/>
            <person name="Siigur E."/>
        </authorList>
    </citation>
    <scope>PROTEIN SEQUENCE OF 27-107</scope>
    <scope>FUNCTION</scope>
    <scope>SUBUNIT</scope>
    <scope>BIOPHYSICOCHEMICAL PROPERTIES</scope>
    <scope>IDENTIFICATION BY MASS SPECTROMETRY</scope>
    <scope>CATALYTIC ACTIVITY</scope>
    <scope>SUBSTRATE SPECIFICITY</scope>
    <scope>SUBCELLULAR LOCATION</scope>
    <source>
        <tissue>Venom</tissue>
    </source>
</reference>
<protein>
    <recommendedName>
        <fullName>L-amino-acid oxidase</fullName>
        <shortName evidence="4">LAAO</shortName>
        <shortName>LAO</shortName>
        <ecNumber evidence="3">1.4.3.2</ecNumber>
    </recommendedName>
</protein>
<keyword id="KW-0044">Antibiotic</keyword>
<keyword id="KW-0929">Antimicrobial</keyword>
<keyword id="KW-0053">Apoptosis</keyword>
<keyword id="KW-0204">Cytolysis</keyword>
<keyword id="KW-0903">Direct protein sequencing</keyword>
<keyword id="KW-1015">Disulfide bond</keyword>
<keyword id="KW-0274">FAD</keyword>
<keyword id="KW-0285">Flavoprotein</keyword>
<keyword id="KW-0325">Glycoprotein</keyword>
<keyword id="KW-0354">Hemolysis</keyword>
<keyword id="KW-1199">Hemostasis impairing toxin</keyword>
<keyword id="KW-0560">Oxidoreductase</keyword>
<keyword id="KW-1201">Platelet aggregation inhibiting toxin</keyword>
<keyword id="KW-0964">Secreted</keyword>
<keyword id="KW-0800">Toxin</keyword>
<comment type="function">
    <text evidence="1 3">Catalyzes an oxidative deamination of predominantly hydrophobic and aromatic L-amino acids, thus producing hydrogen peroxide that may contribute to the diverse toxic effects of this enzyme (PubMed:16828829). Shows high activity on L-Met, moderate activity on L-Trp, L-Leu, L-His, L-Phe, L-Arg, L-Ile, low activity on L-Val, L-Glu, L-Lys, L-Gln, L-Asn, L-Tyr, L-Ala, and no activity on L-Asp, L-Ser, L-Pro, L-Gly, L-Thr and L-Cys (PubMed:16828829). Shows antimicrobial activity inhibiting the growth of both Gram-negative and Gram-positive bacteria (PubMed:16828829). Also inhibits platelet aggregation induced by ADP or collagen (PubMed:16828829). Effects of snake L-amino oxidases on platelets are controversial, since they either induce aggregation or inhibit agonist-induced aggregation (By similarity). These different effects are probably due to different experimental conditions (By similarity). This protein may also induce hemorrhage, hemolysis, edema, apoptosis, and have antiparasitic activities (By similarity).</text>
</comment>
<comment type="catalytic activity">
    <reaction evidence="3">
        <text>an L-alpha-amino acid + O2 + H2O = a 2-oxocarboxylate + H2O2 + NH4(+)</text>
        <dbReference type="Rhea" id="RHEA:13781"/>
        <dbReference type="ChEBI" id="CHEBI:15377"/>
        <dbReference type="ChEBI" id="CHEBI:15379"/>
        <dbReference type="ChEBI" id="CHEBI:16240"/>
        <dbReference type="ChEBI" id="CHEBI:28938"/>
        <dbReference type="ChEBI" id="CHEBI:35179"/>
        <dbReference type="ChEBI" id="CHEBI:59869"/>
        <dbReference type="EC" id="1.4.3.2"/>
    </reaction>
</comment>
<comment type="catalytic activity">
    <reaction evidence="3">
        <text>L-leucine + O2 + H2O = 4-methyl-2-oxopentanoate + H2O2 + NH4(+)</text>
        <dbReference type="Rhea" id="RHEA:60996"/>
        <dbReference type="ChEBI" id="CHEBI:15377"/>
        <dbReference type="ChEBI" id="CHEBI:15379"/>
        <dbReference type="ChEBI" id="CHEBI:16240"/>
        <dbReference type="ChEBI" id="CHEBI:17865"/>
        <dbReference type="ChEBI" id="CHEBI:28938"/>
        <dbReference type="ChEBI" id="CHEBI:57427"/>
    </reaction>
</comment>
<comment type="catalytic activity">
    <reaction evidence="3">
        <text>L-phenylalanine + O2 + H2O = 3-phenylpyruvate + H2O2 + NH4(+)</text>
        <dbReference type="Rhea" id="RHEA:61240"/>
        <dbReference type="ChEBI" id="CHEBI:15377"/>
        <dbReference type="ChEBI" id="CHEBI:15379"/>
        <dbReference type="ChEBI" id="CHEBI:16240"/>
        <dbReference type="ChEBI" id="CHEBI:18005"/>
        <dbReference type="ChEBI" id="CHEBI:28938"/>
        <dbReference type="ChEBI" id="CHEBI:58095"/>
    </reaction>
</comment>
<comment type="catalytic activity">
    <reaction evidence="3">
        <text>L-tryptophan + O2 + H2O = indole-3-pyruvate + H2O2 + NH4(+)</text>
        <dbReference type="Rhea" id="RHEA:61244"/>
        <dbReference type="ChEBI" id="CHEBI:15377"/>
        <dbReference type="ChEBI" id="CHEBI:15379"/>
        <dbReference type="ChEBI" id="CHEBI:16240"/>
        <dbReference type="ChEBI" id="CHEBI:17640"/>
        <dbReference type="ChEBI" id="CHEBI:28938"/>
        <dbReference type="ChEBI" id="CHEBI:57912"/>
    </reaction>
</comment>
<comment type="catalytic activity">
    <reaction evidence="3">
        <text>L-methionine + O2 + H2O = 4-methylsulfanyl-2-oxobutanoate + H2O2 + NH4(+)</text>
        <dbReference type="Rhea" id="RHEA:61236"/>
        <dbReference type="ChEBI" id="CHEBI:15377"/>
        <dbReference type="ChEBI" id="CHEBI:15379"/>
        <dbReference type="ChEBI" id="CHEBI:16240"/>
        <dbReference type="ChEBI" id="CHEBI:16723"/>
        <dbReference type="ChEBI" id="CHEBI:28938"/>
        <dbReference type="ChEBI" id="CHEBI:57844"/>
    </reaction>
</comment>
<comment type="catalytic activity">
    <reaction evidence="3">
        <text>L-isoleucine + O2 + H2O = (S)-3-methyl-2-oxopentanoate + H2O2 + NH4(+)</text>
        <dbReference type="Rhea" id="RHEA:61232"/>
        <dbReference type="ChEBI" id="CHEBI:15377"/>
        <dbReference type="ChEBI" id="CHEBI:15379"/>
        <dbReference type="ChEBI" id="CHEBI:16240"/>
        <dbReference type="ChEBI" id="CHEBI:28938"/>
        <dbReference type="ChEBI" id="CHEBI:35146"/>
        <dbReference type="ChEBI" id="CHEBI:58045"/>
    </reaction>
</comment>
<comment type="catalytic activity">
    <reaction evidence="3">
        <text>L-arginine + O2 + H2O = 5-guanidino-2-oxopentanoate + H2O2 + NH4(+)</text>
        <dbReference type="Rhea" id="RHEA:51404"/>
        <dbReference type="ChEBI" id="CHEBI:15377"/>
        <dbReference type="ChEBI" id="CHEBI:15379"/>
        <dbReference type="ChEBI" id="CHEBI:16240"/>
        <dbReference type="ChEBI" id="CHEBI:28938"/>
        <dbReference type="ChEBI" id="CHEBI:32682"/>
        <dbReference type="ChEBI" id="CHEBI:58489"/>
    </reaction>
</comment>
<comment type="catalytic activity">
    <reaction evidence="3">
        <text>L-histidine + O2 + H2O = 3-(imidazol-5-yl)pyruvate + H2O2 + NH4(+)</text>
        <dbReference type="Rhea" id="RHEA:61228"/>
        <dbReference type="ChEBI" id="CHEBI:15377"/>
        <dbReference type="ChEBI" id="CHEBI:15379"/>
        <dbReference type="ChEBI" id="CHEBI:16240"/>
        <dbReference type="ChEBI" id="CHEBI:28938"/>
        <dbReference type="ChEBI" id="CHEBI:57595"/>
        <dbReference type="ChEBI" id="CHEBI:58133"/>
    </reaction>
</comment>
<comment type="cofactor">
    <cofactor evidence="2">
        <name>FAD</name>
        <dbReference type="ChEBI" id="CHEBI:57692"/>
    </cofactor>
</comment>
<comment type="biophysicochemical properties">
    <kinetics>
        <KM evidence="3">0.4 mM for L-Leu</KM>
        <KM evidence="3">0.65 mM for L-Met</KM>
        <KM evidence="3">0.17 mM for L-Trp</KM>
    </kinetics>
    <temperatureDependence>
        <text evidence="3">Thermostable between 4 and 25 degrees Celsius. At -20 degrees Celsius, the remaining activity is 20%. Heating at 70 degrees Celsius inactivates the enzyme in 15 minutes.</text>
    </temperatureDependence>
</comment>
<comment type="subunit">
    <text evidence="3">Homodimer; non-covalently linked.</text>
</comment>
<comment type="subcellular location">
    <subcellularLocation>
        <location evidence="3">Secreted</location>
    </subcellularLocation>
</comment>
<comment type="tissue specificity">
    <text evidence="6">Expressed by the venom gland.</text>
</comment>
<comment type="PTM">
    <text evidence="2">N-glycosylated.</text>
</comment>
<comment type="similarity">
    <text evidence="5">Belongs to the flavin monoamine oxidase family. FIG1 subfamily.</text>
</comment>
<proteinExistence type="evidence at protein level"/>
<organism>
    <name type="scientific">Macrovipera lebetinus</name>
    <name type="common">Levantine viper</name>
    <name type="synonym">Vipera lebetina</name>
    <dbReference type="NCBI Taxonomy" id="3148341"/>
    <lineage>
        <taxon>Eukaryota</taxon>
        <taxon>Metazoa</taxon>
        <taxon>Chordata</taxon>
        <taxon>Craniata</taxon>
        <taxon>Vertebrata</taxon>
        <taxon>Euteleostomi</taxon>
        <taxon>Lepidosauria</taxon>
        <taxon>Squamata</taxon>
        <taxon>Bifurcata</taxon>
        <taxon>Unidentata</taxon>
        <taxon>Episquamata</taxon>
        <taxon>Toxicofera</taxon>
        <taxon>Serpentes</taxon>
        <taxon>Colubroidea</taxon>
        <taxon>Viperidae</taxon>
        <taxon>Viperinae</taxon>
        <taxon>Macrovipera</taxon>
    </lineage>
</organism>
<evidence type="ECO:0000250" key="1">
    <source>
        <dbReference type="UniProtKB" id="P0CC17"/>
    </source>
</evidence>
<evidence type="ECO:0000250" key="2">
    <source>
        <dbReference type="UniProtKB" id="P81382"/>
    </source>
</evidence>
<evidence type="ECO:0000269" key="3">
    <source>
    </source>
</evidence>
<evidence type="ECO:0000303" key="4">
    <source>
    </source>
</evidence>
<evidence type="ECO:0000305" key="5"/>
<evidence type="ECO:0000305" key="6">
    <source>
    </source>
</evidence>
<sequence>ADDKNPLEECFREDDYEEFLEIAKNGLEGWYANLGPMRYPVKPSEEGKHDDIFAYEKFDEIVGGMDKKFWEDDGIHGGKETFCYSPMIQKPYQFQHFSEALTAPVGR</sequence>